<proteinExistence type="evidence at protein level"/>
<organism>
    <name type="scientific">Escherichia coli (strain K12)</name>
    <dbReference type="NCBI Taxonomy" id="83333"/>
    <lineage>
        <taxon>Bacteria</taxon>
        <taxon>Pseudomonadati</taxon>
        <taxon>Pseudomonadota</taxon>
        <taxon>Gammaproteobacteria</taxon>
        <taxon>Enterobacterales</taxon>
        <taxon>Enterobacteriaceae</taxon>
        <taxon>Escherichia</taxon>
    </lineage>
</organism>
<gene>
    <name type="primary">nudE</name>
    <name type="synonym">yrfE</name>
    <name type="ordered locus">b3397</name>
    <name type="ordered locus">JW3360</name>
</gene>
<comment type="function">
    <text>Active on adenosine(5')triphospho(5')adenosine (Ap3A), ADP-ribose, NADH, adenosine(5')diphospho(5')adenosine (Ap2A).</text>
</comment>
<comment type="catalytic activity">
    <reaction>
        <text>ADP-D-ribose + H2O = D-ribose 5-phosphate + AMP + 2 H(+)</text>
        <dbReference type="Rhea" id="RHEA:10412"/>
        <dbReference type="ChEBI" id="CHEBI:15377"/>
        <dbReference type="ChEBI" id="CHEBI:15378"/>
        <dbReference type="ChEBI" id="CHEBI:57967"/>
        <dbReference type="ChEBI" id="CHEBI:78346"/>
        <dbReference type="ChEBI" id="CHEBI:456215"/>
    </reaction>
</comment>
<comment type="cofactor">
    <cofactor>
        <name>Mg(2+)</name>
        <dbReference type="ChEBI" id="CHEBI:18420"/>
    </cofactor>
    <text>Mg(2+). Other divalent cations can also be used.</text>
</comment>
<comment type="subunit">
    <text evidence="5">Homodimer.</text>
</comment>
<comment type="similarity">
    <text evidence="4">Belongs to the Nudix hydrolase family.</text>
</comment>
<keyword id="KW-0002">3D-structure</keyword>
<keyword id="KW-0378">Hydrolase</keyword>
<keyword id="KW-0460">Magnesium</keyword>
<keyword id="KW-0479">Metal-binding</keyword>
<keyword id="KW-1185">Reference proteome</keyword>
<name>NUDE_ECOLI</name>
<protein>
    <recommendedName>
        <fullName>ADP compounds hydrolase NudE</fullName>
        <ecNumber>3.6.1.-</ecNumber>
    </recommendedName>
</protein>
<dbReference type="EC" id="3.6.1.-"/>
<dbReference type="EMBL" id="U18997">
    <property type="protein sequence ID" value="AAA58194.1"/>
    <property type="molecule type" value="Genomic_DNA"/>
</dbReference>
<dbReference type="EMBL" id="U00096">
    <property type="protein sequence ID" value="AAC76422.1"/>
    <property type="molecule type" value="Genomic_DNA"/>
</dbReference>
<dbReference type="EMBL" id="AP009048">
    <property type="protein sequence ID" value="BAE77894.1"/>
    <property type="molecule type" value="Genomic_DNA"/>
</dbReference>
<dbReference type="PIR" id="H65134">
    <property type="entry name" value="H65134"/>
</dbReference>
<dbReference type="RefSeq" id="NP_417856.1">
    <property type="nucleotide sequence ID" value="NC_000913.3"/>
</dbReference>
<dbReference type="RefSeq" id="WP_000045744.1">
    <property type="nucleotide sequence ID" value="NZ_STEB01000004.1"/>
</dbReference>
<dbReference type="PDB" id="1VHG">
    <property type="method" value="X-ray"/>
    <property type="resolution" value="2.70 A"/>
    <property type="chains" value="A/B=2-186"/>
</dbReference>
<dbReference type="PDB" id="1VHZ">
    <property type="method" value="X-ray"/>
    <property type="resolution" value="2.32 A"/>
    <property type="chains" value="A/B=2-186"/>
</dbReference>
<dbReference type="PDBsum" id="1VHG"/>
<dbReference type="PDBsum" id="1VHZ"/>
<dbReference type="SMR" id="P45799"/>
<dbReference type="BioGRID" id="4261276">
    <property type="interactions" value="225"/>
</dbReference>
<dbReference type="FunCoup" id="P45799">
    <property type="interactions" value="392"/>
</dbReference>
<dbReference type="IntAct" id="P45799">
    <property type="interactions" value="1"/>
</dbReference>
<dbReference type="STRING" id="511145.b3397"/>
<dbReference type="DrugBank" id="DB02059">
    <property type="generic name" value="Adenosine-5-Diphosphoribose"/>
</dbReference>
<dbReference type="jPOST" id="P45799"/>
<dbReference type="PaxDb" id="511145-b3397"/>
<dbReference type="EnsemblBacteria" id="AAC76422">
    <property type="protein sequence ID" value="AAC76422"/>
    <property type="gene ID" value="b3397"/>
</dbReference>
<dbReference type="GeneID" id="75206335"/>
<dbReference type="GeneID" id="947906"/>
<dbReference type="KEGG" id="ecj:JW3360"/>
<dbReference type="KEGG" id="eco:b3397"/>
<dbReference type="KEGG" id="ecoc:C3026_18430"/>
<dbReference type="PATRIC" id="fig|1411691.4.peg.3333"/>
<dbReference type="EchoBASE" id="EB2762"/>
<dbReference type="eggNOG" id="COG0494">
    <property type="taxonomic scope" value="Bacteria"/>
</dbReference>
<dbReference type="HOGENOM" id="CLU_062658_4_0_6"/>
<dbReference type="InParanoid" id="P45799"/>
<dbReference type="OMA" id="VRWPLAQ"/>
<dbReference type="OrthoDB" id="9806150at2"/>
<dbReference type="PhylomeDB" id="P45799"/>
<dbReference type="BioCyc" id="EcoCyc:G7740-MONOMER"/>
<dbReference type="BioCyc" id="MetaCyc:G7740-MONOMER"/>
<dbReference type="EvolutionaryTrace" id="P45799"/>
<dbReference type="PRO" id="PR:P45799"/>
<dbReference type="Proteomes" id="UP000000625">
    <property type="component" value="Chromosome"/>
</dbReference>
<dbReference type="GO" id="GO:0005829">
    <property type="term" value="C:cytosol"/>
    <property type="evidence" value="ECO:0000314"/>
    <property type="project" value="EcoCyc"/>
</dbReference>
<dbReference type="GO" id="GO:0047631">
    <property type="term" value="F:ADP-ribose diphosphatase activity"/>
    <property type="evidence" value="ECO:0007669"/>
    <property type="project" value="RHEA"/>
</dbReference>
<dbReference type="GO" id="GO:0019144">
    <property type="term" value="F:ADP-sugar diphosphatase activity"/>
    <property type="evidence" value="ECO:0000314"/>
    <property type="project" value="EcoCyc"/>
</dbReference>
<dbReference type="GO" id="GO:0000287">
    <property type="term" value="F:magnesium ion binding"/>
    <property type="evidence" value="ECO:0000314"/>
    <property type="project" value="EcoCyc"/>
</dbReference>
<dbReference type="GO" id="GO:0042803">
    <property type="term" value="F:protein homodimerization activity"/>
    <property type="evidence" value="ECO:0000314"/>
    <property type="project" value="EcoCyc"/>
</dbReference>
<dbReference type="GO" id="GO:0006753">
    <property type="term" value="P:nucleoside phosphate metabolic process"/>
    <property type="evidence" value="ECO:0000318"/>
    <property type="project" value="GO_Central"/>
</dbReference>
<dbReference type="GO" id="GO:0019693">
    <property type="term" value="P:ribose phosphate metabolic process"/>
    <property type="evidence" value="ECO:0000318"/>
    <property type="project" value="GO_Central"/>
</dbReference>
<dbReference type="CDD" id="cd24156">
    <property type="entry name" value="NUDIX_ADPRase_NudE"/>
    <property type="match status" value="1"/>
</dbReference>
<dbReference type="FunFam" id="3.90.79.10:FF:000006">
    <property type="entry name" value="ADP compounds hydrolase NudE"/>
    <property type="match status" value="1"/>
</dbReference>
<dbReference type="Gene3D" id="3.90.79.10">
    <property type="entry name" value="Nucleoside Triphosphate Pyrophosphohydrolase"/>
    <property type="match status" value="1"/>
</dbReference>
<dbReference type="InterPro" id="IPR015797">
    <property type="entry name" value="NUDIX_hydrolase-like_dom_sf"/>
</dbReference>
<dbReference type="InterPro" id="IPR020084">
    <property type="entry name" value="NUDIX_hydrolase_CS"/>
</dbReference>
<dbReference type="InterPro" id="IPR000086">
    <property type="entry name" value="NUDIX_hydrolase_dom"/>
</dbReference>
<dbReference type="NCBIfam" id="NF008736">
    <property type="entry name" value="PRK11762.1"/>
    <property type="match status" value="1"/>
</dbReference>
<dbReference type="PANTHER" id="PTHR11839:SF12">
    <property type="entry name" value="ADP COMPOUNDS HYDROLASE NUDE"/>
    <property type="match status" value="1"/>
</dbReference>
<dbReference type="PANTHER" id="PTHR11839">
    <property type="entry name" value="UDP/ADP-SUGAR PYROPHOSPHATASE"/>
    <property type="match status" value="1"/>
</dbReference>
<dbReference type="Pfam" id="PF00293">
    <property type="entry name" value="NUDIX"/>
    <property type="match status" value="1"/>
</dbReference>
<dbReference type="SUPFAM" id="SSF55811">
    <property type="entry name" value="Nudix"/>
    <property type="match status" value="1"/>
</dbReference>
<dbReference type="PROSITE" id="PS51462">
    <property type="entry name" value="NUDIX"/>
    <property type="match status" value="1"/>
</dbReference>
<dbReference type="PROSITE" id="PS00893">
    <property type="entry name" value="NUDIX_BOX"/>
    <property type="match status" value="1"/>
</dbReference>
<feature type="chain" id="PRO_0000056989" description="ADP compounds hydrolase NudE">
    <location>
        <begin position="1"/>
        <end position="186"/>
    </location>
</feature>
<feature type="domain" description="Nudix hydrolase" evidence="2">
    <location>
        <begin position="45"/>
        <end position="172"/>
    </location>
</feature>
<feature type="short sequence motif" description="Nudix box">
    <location>
        <begin position="80"/>
        <end position="101"/>
    </location>
</feature>
<feature type="binding site" evidence="3">
    <location>
        <position position="40"/>
    </location>
    <ligand>
        <name>substrate</name>
    </ligand>
</feature>
<feature type="binding site" evidence="1">
    <location>
        <position position="95"/>
    </location>
    <ligand>
        <name>a divalent metal cation</name>
        <dbReference type="ChEBI" id="CHEBI:60240"/>
    </ligand>
</feature>
<feature type="binding site" evidence="1">
    <location>
        <position position="99"/>
    </location>
    <ligand>
        <name>a divalent metal cation</name>
        <dbReference type="ChEBI" id="CHEBI:60240"/>
    </ligand>
</feature>
<feature type="binding site" evidence="3">
    <location>
        <position position="118"/>
    </location>
    <ligand>
        <name>substrate</name>
    </ligand>
</feature>
<feature type="strand" evidence="6">
    <location>
        <begin position="9"/>
        <end position="18"/>
    </location>
</feature>
<feature type="strand" evidence="6">
    <location>
        <begin position="23"/>
        <end position="30"/>
    </location>
</feature>
<feature type="strand" evidence="6">
    <location>
        <begin position="36"/>
        <end position="42"/>
    </location>
</feature>
<feature type="strand" evidence="6">
    <location>
        <begin position="49"/>
        <end position="56"/>
    </location>
</feature>
<feature type="strand" evidence="6">
    <location>
        <begin position="59"/>
        <end position="67"/>
    </location>
</feature>
<feature type="turn" evidence="6">
    <location>
        <begin position="68"/>
        <end position="71"/>
    </location>
</feature>
<feature type="strand" evidence="6">
    <location>
        <begin position="72"/>
        <end position="76"/>
    </location>
</feature>
<feature type="strand" evidence="6">
    <location>
        <begin position="78"/>
        <end position="81"/>
    </location>
</feature>
<feature type="helix" evidence="6">
    <location>
        <begin position="88"/>
        <end position="100"/>
    </location>
</feature>
<feature type="strand" evidence="6">
    <location>
        <begin position="101"/>
        <end position="114"/>
    </location>
</feature>
<feature type="turn" evidence="6">
    <location>
        <begin position="117"/>
        <end position="119"/>
    </location>
</feature>
<feature type="strand" evidence="6">
    <location>
        <begin position="123"/>
        <end position="134"/>
    </location>
</feature>
<feature type="strand" evidence="6">
    <location>
        <begin position="147"/>
        <end position="151"/>
    </location>
</feature>
<feature type="helix" evidence="6">
    <location>
        <begin position="152"/>
        <end position="160"/>
    </location>
</feature>
<feature type="turn" evidence="6">
    <location>
        <begin position="162"/>
        <end position="164"/>
    </location>
</feature>
<feature type="helix" evidence="6">
    <location>
        <begin position="167"/>
        <end position="182"/>
    </location>
</feature>
<evidence type="ECO:0000250" key="1"/>
<evidence type="ECO:0000255" key="2">
    <source>
        <dbReference type="PROSITE-ProRule" id="PRU00794"/>
    </source>
</evidence>
<evidence type="ECO:0000269" key="3">
    <source>
    </source>
</evidence>
<evidence type="ECO:0000305" key="4"/>
<evidence type="ECO:0000305" key="5">
    <source>
    </source>
</evidence>
<evidence type="ECO:0007829" key="6">
    <source>
        <dbReference type="PDB" id="1VHZ"/>
    </source>
</evidence>
<reference key="1">
    <citation type="journal article" date="1997" name="Science">
        <title>The complete genome sequence of Escherichia coli K-12.</title>
        <authorList>
            <person name="Blattner F.R."/>
            <person name="Plunkett G. III"/>
            <person name="Bloch C.A."/>
            <person name="Perna N.T."/>
            <person name="Burland V."/>
            <person name="Riley M."/>
            <person name="Collado-Vides J."/>
            <person name="Glasner J.D."/>
            <person name="Rode C.K."/>
            <person name="Mayhew G.F."/>
            <person name="Gregor J."/>
            <person name="Davis N.W."/>
            <person name="Kirkpatrick H.A."/>
            <person name="Goeden M.A."/>
            <person name="Rose D.J."/>
            <person name="Mau B."/>
            <person name="Shao Y."/>
        </authorList>
    </citation>
    <scope>NUCLEOTIDE SEQUENCE [LARGE SCALE GENOMIC DNA]</scope>
    <source>
        <strain>K12 / MG1655 / ATCC 47076</strain>
    </source>
</reference>
<reference key="2">
    <citation type="journal article" date="2006" name="Mol. Syst. Biol.">
        <title>Highly accurate genome sequences of Escherichia coli K-12 strains MG1655 and W3110.</title>
        <authorList>
            <person name="Hayashi K."/>
            <person name="Morooka N."/>
            <person name="Yamamoto Y."/>
            <person name="Fujita K."/>
            <person name="Isono K."/>
            <person name="Choi S."/>
            <person name="Ohtsubo E."/>
            <person name="Baba T."/>
            <person name="Wanner B.L."/>
            <person name="Mori H."/>
            <person name="Horiuchi T."/>
        </authorList>
    </citation>
    <scope>NUCLEOTIDE SEQUENCE [LARGE SCALE GENOMIC DNA]</scope>
    <source>
        <strain>K12 / W3110 / ATCC 27325 / DSM 5911</strain>
    </source>
</reference>
<reference key="3">
    <citation type="journal article" date="1998" name="J. Biol. Chem.">
        <title>Orf186 represents a new member of the Nudix hydrolases, active on adenosine(5')triphospho(5')adenosine, ADP-ribose, and NADH.</title>
        <authorList>
            <person name="O'Handley S.F."/>
            <person name="Frick D.N."/>
            <person name="Dunn C.A."/>
            <person name="Bessman M.J."/>
        </authorList>
    </citation>
    <scope>CHARACTERIZATION</scope>
</reference>
<reference key="4">
    <citation type="journal article" date="2005" name="Proteins">
        <title>Structural analysis of a set of proteins resulting from a bacterial genomics project.</title>
        <authorList>
            <person name="Badger J."/>
            <person name="Sauder J.M."/>
            <person name="Adams J.M."/>
            <person name="Antonysamy S."/>
            <person name="Bain K."/>
            <person name="Bergseid M.G."/>
            <person name="Buchanan S.G."/>
            <person name="Buchanan M.D."/>
            <person name="Batiyenko Y."/>
            <person name="Christopher J.A."/>
            <person name="Emtage S."/>
            <person name="Eroshkina A."/>
            <person name="Feil I."/>
            <person name="Furlong E.B."/>
            <person name="Gajiwala K.S."/>
            <person name="Gao X."/>
            <person name="He D."/>
            <person name="Hendle J."/>
            <person name="Huber A."/>
            <person name="Hoda K."/>
            <person name="Kearins P."/>
            <person name="Kissinger C."/>
            <person name="Laubert B."/>
            <person name="Lewis H.A."/>
            <person name="Lin J."/>
            <person name="Loomis K."/>
            <person name="Lorimer D."/>
            <person name="Louie G."/>
            <person name="Maletic M."/>
            <person name="Marsh C.D."/>
            <person name="Miller I."/>
            <person name="Molinari J."/>
            <person name="Muller-Dieckmann H.J."/>
            <person name="Newman J.M."/>
            <person name="Noland B.W."/>
            <person name="Pagarigan B."/>
            <person name="Park F."/>
            <person name="Peat T.S."/>
            <person name="Post K.W."/>
            <person name="Radojicic S."/>
            <person name="Ramos A."/>
            <person name="Romero R."/>
            <person name="Rutter M.E."/>
            <person name="Sanderson W.E."/>
            <person name="Schwinn K.D."/>
            <person name="Tresser J."/>
            <person name="Winhoven J."/>
            <person name="Wright T.A."/>
            <person name="Wu L."/>
            <person name="Xu J."/>
            <person name="Harris T.J.R."/>
        </authorList>
    </citation>
    <scope>X-RAY CRYSTALLOGRAPHY (2.7 ANGSTROMS) OF 2-186 IN COMPLEX WITH SUBSTRATE</scope>
    <scope>SUBUNIT</scope>
</reference>
<sequence length="186" mass="21153">MSKSLQKPTILNVETVARSRLFTVESVDLEFSNGVRRVYERMRPTNREAVMIVPIVDDHLILIREYAVGTESYELGFSKGLIDPGESVYEAANRELKEEVGFGANDLTFLKKLSMAPSYFSSKMNIVVAQDLYPESLEGDEPEPLPQVRWPLAHMMDLLEDPDFNEARNVSALFLVREWLKGQGRV</sequence>
<accession>P45799</accession>
<accession>Q2M762</accession>